<protein>
    <recommendedName>
        <fullName evidence="1">Outer-membrane lipoprotein carrier protein</fullName>
    </recommendedName>
</protein>
<name>LOLA_SHESH</name>
<keyword id="KW-0143">Chaperone</keyword>
<keyword id="KW-0574">Periplasm</keyword>
<keyword id="KW-0653">Protein transport</keyword>
<keyword id="KW-1185">Reference proteome</keyword>
<keyword id="KW-0732">Signal</keyword>
<keyword id="KW-0813">Transport</keyword>
<evidence type="ECO:0000255" key="1">
    <source>
        <dbReference type="HAMAP-Rule" id="MF_00240"/>
    </source>
</evidence>
<accession>A8FV64</accession>
<feature type="signal peptide" evidence="1">
    <location>
        <begin position="1"/>
        <end position="22"/>
    </location>
</feature>
<feature type="chain" id="PRO_5000278336" description="Outer-membrane lipoprotein carrier protein">
    <location>
        <begin position="23"/>
        <end position="208"/>
    </location>
</feature>
<reference key="1">
    <citation type="submission" date="2007-08" db="EMBL/GenBank/DDBJ databases">
        <title>Complete sequence of Shewanella sediminis HAW-EB3.</title>
        <authorList>
            <consortium name="US DOE Joint Genome Institute"/>
            <person name="Copeland A."/>
            <person name="Lucas S."/>
            <person name="Lapidus A."/>
            <person name="Barry K."/>
            <person name="Glavina del Rio T."/>
            <person name="Dalin E."/>
            <person name="Tice H."/>
            <person name="Pitluck S."/>
            <person name="Chertkov O."/>
            <person name="Brettin T."/>
            <person name="Bruce D."/>
            <person name="Detter J.C."/>
            <person name="Han C."/>
            <person name="Schmutz J."/>
            <person name="Larimer F."/>
            <person name="Land M."/>
            <person name="Hauser L."/>
            <person name="Kyrpides N."/>
            <person name="Kim E."/>
            <person name="Zhao J.-S."/>
            <person name="Richardson P."/>
        </authorList>
    </citation>
    <scope>NUCLEOTIDE SEQUENCE [LARGE SCALE GENOMIC DNA]</scope>
    <source>
        <strain>HAW-EB3</strain>
    </source>
</reference>
<comment type="function">
    <text evidence="1">Participates in the translocation of lipoproteins from the inner membrane to the outer membrane. Only forms a complex with a lipoprotein if the residue after the N-terminal Cys is not an aspartate (The Asp acts as a targeting signal to indicate that the lipoprotein should stay in the inner membrane).</text>
</comment>
<comment type="subunit">
    <text evidence="1">Monomer.</text>
</comment>
<comment type="subcellular location">
    <subcellularLocation>
        <location evidence="1">Periplasm</location>
    </subcellularLocation>
</comment>
<comment type="similarity">
    <text evidence="1">Belongs to the LolA family.</text>
</comment>
<proteinExistence type="inferred from homology"/>
<organism>
    <name type="scientific">Shewanella sediminis (strain HAW-EB3)</name>
    <dbReference type="NCBI Taxonomy" id="425104"/>
    <lineage>
        <taxon>Bacteria</taxon>
        <taxon>Pseudomonadati</taxon>
        <taxon>Pseudomonadota</taxon>
        <taxon>Gammaproteobacteria</taxon>
        <taxon>Alteromonadales</taxon>
        <taxon>Shewanellaceae</taxon>
        <taxon>Shewanella</taxon>
    </lineage>
</organism>
<sequence length="208" mass="22994">MRKTLSILAISLPLLVSGYAQASESGVLKAKLAEISTLKANFTQTVTDVNKKEIQKGSGVFALAYPNQFYWHLTEPDESLIVADGRDVWIYNPFAEEVSVMDLNQAINASPIALLVHRDEETWSKYTVTNEEGCFSIAPKSVDAGVESVDVCFDGNTLTQMVLQDQQGNVSQFMLSDQTAISDDELSMFKFTVPDDVDIDDQRLNTVN</sequence>
<gene>
    <name evidence="1" type="primary">lolA</name>
    <name type="ordered locus">Ssed_2128</name>
</gene>
<dbReference type="EMBL" id="CP000821">
    <property type="protein sequence ID" value="ABV36737.1"/>
    <property type="molecule type" value="Genomic_DNA"/>
</dbReference>
<dbReference type="RefSeq" id="WP_012142472.1">
    <property type="nucleotide sequence ID" value="NC_009831.1"/>
</dbReference>
<dbReference type="SMR" id="A8FV64"/>
<dbReference type="STRING" id="425104.Ssed_2128"/>
<dbReference type="KEGG" id="sse:Ssed_2128"/>
<dbReference type="eggNOG" id="COG2834">
    <property type="taxonomic scope" value="Bacteria"/>
</dbReference>
<dbReference type="HOGENOM" id="CLU_087560_0_0_6"/>
<dbReference type="OrthoDB" id="9787361at2"/>
<dbReference type="Proteomes" id="UP000002015">
    <property type="component" value="Chromosome"/>
</dbReference>
<dbReference type="GO" id="GO:0030288">
    <property type="term" value="C:outer membrane-bounded periplasmic space"/>
    <property type="evidence" value="ECO:0007669"/>
    <property type="project" value="TreeGrafter"/>
</dbReference>
<dbReference type="GO" id="GO:0044874">
    <property type="term" value="P:lipoprotein localization to outer membrane"/>
    <property type="evidence" value="ECO:0007669"/>
    <property type="project" value="UniProtKB-UniRule"/>
</dbReference>
<dbReference type="GO" id="GO:0042953">
    <property type="term" value="P:lipoprotein transport"/>
    <property type="evidence" value="ECO:0007669"/>
    <property type="project" value="InterPro"/>
</dbReference>
<dbReference type="CDD" id="cd16325">
    <property type="entry name" value="LolA"/>
    <property type="match status" value="1"/>
</dbReference>
<dbReference type="Gene3D" id="2.50.20.10">
    <property type="entry name" value="Lipoprotein localisation LolA/LolB/LppX"/>
    <property type="match status" value="1"/>
</dbReference>
<dbReference type="HAMAP" id="MF_00240">
    <property type="entry name" value="LolA"/>
    <property type="match status" value="1"/>
</dbReference>
<dbReference type="InterPro" id="IPR029046">
    <property type="entry name" value="LolA/LolB/LppX"/>
</dbReference>
<dbReference type="InterPro" id="IPR004564">
    <property type="entry name" value="OM_lipoprot_carrier_LolA-like"/>
</dbReference>
<dbReference type="InterPro" id="IPR018323">
    <property type="entry name" value="OM_lipoprot_carrier_LolA_Pbac"/>
</dbReference>
<dbReference type="NCBIfam" id="TIGR00547">
    <property type="entry name" value="lolA"/>
    <property type="match status" value="1"/>
</dbReference>
<dbReference type="PANTHER" id="PTHR35869">
    <property type="entry name" value="OUTER-MEMBRANE LIPOPROTEIN CARRIER PROTEIN"/>
    <property type="match status" value="1"/>
</dbReference>
<dbReference type="PANTHER" id="PTHR35869:SF1">
    <property type="entry name" value="OUTER-MEMBRANE LIPOPROTEIN CARRIER PROTEIN"/>
    <property type="match status" value="1"/>
</dbReference>
<dbReference type="Pfam" id="PF03548">
    <property type="entry name" value="LolA"/>
    <property type="match status" value="1"/>
</dbReference>
<dbReference type="SUPFAM" id="SSF89392">
    <property type="entry name" value="Prokaryotic lipoproteins and lipoprotein localization factors"/>
    <property type="match status" value="1"/>
</dbReference>